<keyword id="KW-0131">Cell cycle</keyword>
<keyword id="KW-0132">Cell division</keyword>
<keyword id="KW-0963">Cytoplasm</keyword>
<keyword id="KW-0344">Guanine-nucleotide releasing factor</keyword>
<keyword id="KW-1185">Reference proteome</keyword>
<keyword id="KW-0717">Septation</keyword>
<protein>
    <recommendedName>
        <fullName>Rho guanine nucleotide exchange factor gef3</fullName>
    </recommendedName>
</protein>
<comment type="function">
    <text evidence="2">Has a role in the control of cell polarity and cytokinesis. Involved in bipolar growth and septum formation.</text>
</comment>
<comment type="subcellular location">
    <subcellularLocation>
        <location evidence="3">Cytoplasm</location>
    </subcellularLocation>
    <text>Septum.</text>
</comment>
<sequence>MSNPRMFQSRGKRVVSDSLPIANSTHTLEDTLKLRPDWTIALSQHETETRSTRTSCSTTTESTIAMRSKQKAIISVLEEFRDSEAAYVHDLHVAQRYYADRLSDRVKKSEWKDVFEIFLVLCKQASLFEIEMHKSLNDEINYILDDQDACLKPKPSVAQLFLSWLPKLSAVYGRYCVIQENIGKKVEKWMKNSSISEYLQECDSMAKIESNSWNLDSFLVKPVQRFLKYPLLLNQLYRSASLGIISDYVLLGEACHKSEIASQRMNELKRRRDIIITALDSVSNSQEVLLLSTDSIDKKIAKLQNSTNIFYVPEHEPILAFVHQLSSSYTNLLNLRSAICDWLKFSRYHYLKFFTFVEAYSVFCKDTKSADKWALISVALDNIAKGAVLRLTEQCQTSVLRPISNGILFFRNPLCVTDVWIKKATAFSKRRQSQVFEEDLESFPLLSNCLLEELPLFLEMARNVTDECILAFAQIQATFYDTIQKVLEPVVAKFNLTDHQDIPSIESIMDFTSLRSSMESSPKSK</sequence>
<feature type="chain" id="PRO_0000255583" description="Rho guanine nucleotide exchange factor gef3">
    <location>
        <begin position="1"/>
        <end position="525"/>
    </location>
</feature>
<feature type="domain" description="DH" evidence="1">
    <location>
        <begin position="72"/>
        <end position="268"/>
    </location>
</feature>
<gene>
    <name type="primary">gef3</name>
    <name type="ORF">SPBC29A3.17</name>
</gene>
<name>GEF3_SCHPO</name>
<dbReference type="EMBL" id="CU329671">
    <property type="protein sequence ID" value="CAA18394.1"/>
    <property type="molecule type" value="Genomic_DNA"/>
</dbReference>
<dbReference type="PIR" id="T40088">
    <property type="entry name" value="T40088"/>
</dbReference>
<dbReference type="RefSeq" id="NP_595845.1">
    <property type="nucleotide sequence ID" value="NM_001021749.2"/>
</dbReference>
<dbReference type="SMR" id="O59679"/>
<dbReference type="BioGRID" id="276864">
    <property type="interactions" value="12"/>
</dbReference>
<dbReference type="FunCoup" id="O59679">
    <property type="interactions" value="7"/>
</dbReference>
<dbReference type="STRING" id="284812.O59679"/>
<dbReference type="iPTMnet" id="O59679"/>
<dbReference type="PaxDb" id="4896-SPBC29A3.17.1"/>
<dbReference type="EnsemblFungi" id="SPBC29A3.17.1">
    <property type="protein sequence ID" value="SPBC29A3.17.1:pep"/>
    <property type="gene ID" value="SPBC29A3.17"/>
</dbReference>
<dbReference type="GeneID" id="2540334"/>
<dbReference type="KEGG" id="spo:2540334"/>
<dbReference type="PomBase" id="SPBC29A3.17">
    <property type="gene designation" value="gef3"/>
</dbReference>
<dbReference type="VEuPathDB" id="FungiDB:SPBC29A3.17"/>
<dbReference type="eggNOG" id="KOG3519">
    <property type="taxonomic scope" value="Eukaryota"/>
</dbReference>
<dbReference type="HOGENOM" id="CLU_524923_0_0_1"/>
<dbReference type="InParanoid" id="O59679"/>
<dbReference type="OMA" id="ECDSMAK"/>
<dbReference type="PhylomeDB" id="O59679"/>
<dbReference type="Reactome" id="R-SPO-416482">
    <property type="pathway name" value="G alpha (12/13) signalling events"/>
</dbReference>
<dbReference type="Reactome" id="R-SPO-9013148">
    <property type="pathway name" value="CDC42 GTPase cycle"/>
</dbReference>
<dbReference type="PRO" id="PR:O59679"/>
<dbReference type="Proteomes" id="UP000002485">
    <property type="component" value="Chromosome II"/>
</dbReference>
<dbReference type="GO" id="GO:0032153">
    <property type="term" value="C:cell division site"/>
    <property type="evidence" value="ECO:0007005"/>
    <property type="project" value="PomBase"/>
</dbReference>
<dbReference type="GO" id="GO:0005829">
    <property type="term" value="C:cytosol"/>
    <property type="evidence" value="ECO:0007005"/>
    <property type="project" value="PomBase"/>
</dbReference>
<dbReference type="GO" id="GO:0036391">
    <property type="term" value="C:medial cortex septin ring"/>
    <property type="evidence" value="ECO:0000314"/>
    <property type="project" value="PomBase"/>
</dbReference>
<dbReference type="GO" id="GO:0005085">
    <property type="term" value="F:guanyl-nucleotide exchange factor activity"/>
    <property type="evidence" value="ECO:0000314"/>
    <property type="project" value="PomBase"/>
</dbReference>
<dbReference type="GO" id="GO:0000917">
    <property type="term" value="P:division septum assembly"/>
    <property type="evidence" value="ECO:0007669"/>
    <property type="project" value="UniProtKB-KW"/>
</dbReference>
<dbReference type="GO" id="GO:2001043">
    <property type="term" value="P:positive regulation of septum digestion after cytokinesis"/>
    <property type="evidence" value="ECO:0000269"/>
    <property type="project" value="PomBase"/>
</dbReference>
<dbReference type="GO" id="GO:1905391">
    <property type="term" value="P:regulation of protein localization to cell division site involved in cell separation after cytokinesis"/>
    <property type="evidence" value="ECO:0000315"/>
    <property type="project" value="PomBase"/>
</dbReference>
<dbReference type="GO" id="GO:0016192">
    <property type="term" value="P:vesicle-mediated transport"/>
    <property type="evidence" value="ECO:0000315"/>
    <property type="project" value="PomBase"/>
</dbReference>
<dbReference type="CDD" id="cd00160">
    <property type="entry name" value="RhoGEF"/>
    <property type="match status" value="1"/>
</dbReference>
<dbReference type="FunFam" id="1.20.900.10:FF:000038">
    <property type="entry name" value="Myosin-M heavy chain"/>
    <property type="match status" value="1"/>
</dbReference>
<dbReference type="Gene3D" id="1.20.1270.60">
    <property type="entry name" value="Arfaptin homology (AH) domain/BAR domain"/>
    <property type="match status" value="1"/>
</dbReference>
<dbReference type="Gene3D" id="1.20.900.10">
    <property type="entry name" value="Dbl homology (DH) domain"/>
    <property type="match status" value="1"/>
</dbReference>
<dbReference type="InterPro" id="IPR027267">
    <property type="entry name" value="AH/BAR_dom_sf"/>
</dbReference>
<dbReference type="InterPro" id="IPR035899">
    <property type="entry name" value="DBL_dom_sf"/>
</dbReference>
<dbReference type="InterPro" id="IPR000219">
    <property type="entry name" value="DH_dom"/>
</dbReference>
<dbReference type="InterPro" id="IPR051492">
    <property type="entry name" value="Dynamin-Rho_GEF"/>
</dbReference>
<dbReference type="PANTHER" id="PTHR22834">
    <property type="entry name" value="NUCLEAR FUSION PROTEIN FUS2"/>
    <property type="match status" value="1"/>
</dbReference>
<dbReference type="PANTHER" id="PTHR22834:SF20">
    <property type="entry name" value="SH3 DOMAIN-CONTAINING PROTEIN"/>
    <property type="match status" value="1"/>
</dbReference>
<dbReference type="Pfam" id="PF00621">
    <property type="entry name" value="RhoGEF"/>
    <property type="match status" value="1"/>
</dbReference>
<dbReference type="SMART" id="SM00325">
    <property type="entry name" value="RhoGEF"/>
    <property type="match status" value="1"/>
</dbReference>
<dbReference type="SUPFAM" id="SSF103657">
    <property type="entry name" value="BAR/IMD domain-like"/>
    <property type="match status" value="1"/>
</dbReference>
<dbReference type="SUPFAM" id="SSF48065">
    <property type="entry name" value="DBL homology domain (DH-domain)"/>
    <property type="match status" value="1"/>
</dbReference>
<dbReference type="PROSITE" id="PS50010">
    <property type="entry name" value="DH_2"/>
    <property type="match status" value="1"/>
</dbReference>
<organism>
    <name type="scientific">Schizosaccharomyces pombe (strain 972 / ATCC 24843)</name>
    <name type="common">Fission yeast</name>
    <dbReference type="NCBI Taxonomy" id="284812"/>
    <lineage>
        <taxon>Eukaryota</taxon>
        <taxon>Fungi</taxon>
        <taxon>Dikarya</taxon>
        <taxon>Ascomycota</taxon>
        <taxon>Taphrinomycotina</taxon>
        <taxon>Schizosaccharomycetes</taxon>
        <taxon>Schizosaccharomycetales</taxon>
        <taxon>Schizosaccharomycetaceae</taxon>
        <taxon>Schizosaccharomyces</taxon>
    </lineage>
</organism>
<reference key="1">
    <citation type="journal article" date="2002" name="Nature">
        <title>The genome sequence of Schizosaccharomyces pombe.</title>
        <authorList>
            <person name="Wood V."/>
            <person name="Gwilliam R."/>
            <person name="Rajandream M.A."/>
            <person name="Lyne M.H."/>
            <person name="Lyne R."/>
            <person name="Stewart A."/>
            <person name="Sgouros J.G."/>
            <person name="Peat N."/>
            <person name="Hayles J."/>
            <person name="Baker S.G."/>
            <person name="Basham D."/>
            <person name="Bowman S."/>
            <person name="Brooks K."/>
            <person name="Brown D."/>
            <person name="Brown S."/>
            <person name="Chillingworth T."/>
            <person name="Churcher C.M."/>
            <person name="Collins M."/>
            <person name="Connor R."/>
            <person name="Cronin A."/>
            <person name="Davis P."/>
            <person name="Feltwell T."/>
            <person name="Fraser A."/>
            <person name="Gentles S."/>
            <person name="Goble A."/>
            <person name="Hamlin N."/>
            <person name="Harris D.E."/>
            <person name="Hidalgo J."/>
            <person name="Hodgson G."/>
            <person name="Holroyd S."/>
            <person name="Hornsby T."/>
            <person name="Howarth S."/>
            <person name="Huckle E.J."/>
            <person name="Hunt S."/>
            <person name="Jagels K."/>
            <person name="James K.D."/>
            <person name="Jones L."/>
            <person name="Jones M."/>
            <person name="Leather S."/>
            <person name="McDonald S."/>
            <person name="McLean J."/>
            <person name="Mooney P."/>
            <person name="Moule S."/>
            <person name="Mungall K.L."/>
            <person name="Murphy L.D."/>
            <person name="Niblett D."/>
            <person name="Odell C."/>
            <person name="Oliver K."/>
            <person name="O'Neil S."/>
            <person name="Pearson D."/>
            <person name="Quail M.A."/>
            <person name="Rabbinowitsch E."/>
            <person name="Rutherford K.M."/>
            <person name="Rutter S."/>
            <person name="Saunders D."/>
            <person name="Seeger K."/>
            <person name="Sharp S."/>
            <person name="Skelton J."/>
            <person name="Simmonds M.N."/>
            <person name="Squares R."/>
            <person name="Squares S."/>
            <person name="Stevens K."/>
            <person name="Taylor K."/>
            <person name="Taylor R.G."/>
            <person name="Tivey A."/>
            <person name="Walsh S.V."/>
            <person name="Warren T."/>
            <person name="Whitehead S."/>
            <person name="Woodward J.R."/>
            <person name="Volckaert G."/>
            <person name="Aert R."/>
            <person name="Robben J."/>
            <person name="Grymonprez B."/>
            <person name="Weltjens I."/>
            <person name="Vanstreels E."/>
            <person name="Rieger M."/>
            <person name="Schaefer M."/>
            <person name="Mueller-Auer S."/>
            <person name="Gabel C."/>
            <person name="Fuchs M."/>
            <person name="Duesterhoeft A."/>
            <person name="Fritzc C."/>
            <person name="Holzer E."/>
            <person name="Moestl D."/>
            <person name="Hilbert H."/>
            <person name="Borzym K."/>
            <person name="Langer I."/>
            <person name="Beck A."/>
            <person name="Lehrach H."/>
            <person name="Reinhardt R."/>
            <person name="Pohl T.M."/>
            <person name="Eger P."/>
            <person name="Zimmermann W."/>
            <person name="Wedler H."/>
            <person name="Wambutt R."/>
            <person name="Purnelle B."/>
            <person name="Goffeau A."/>
            <person name="Cadieu E."/>
            <person name="Dreano S."/>
            <person name="Gloux S."/>
            <person name="Lelaure V."/>
            <person name="Mottier S."/>
            <person name="Galibert F."/>
            <person name="Aves S.J."/>
            <person name="Xiang Z."/>
            <person name="Hunt C."/>
            <person name="Moore K."/>
            <person name="Hurst S.M."/>
            <person name="Lucas M."/>
            <person name="Rochet M."/>
            <person name="Gaillardin C."/>
            <person name="Tallada V.A."/>
            <person name="Garzon A."/>
            <person name="Thode G."/>
            <person name="Daga R.R."/>
            <person name="Cruzado L."/>
            <person name="Jimenez J."/>
            <person name="Sanchez M."/>
            <person name="del Rey F."/>
            <person name="Benito J."/>
            <person name="Dominguez A."/>
            <person name="Revuelta J.L."/>
            <person name="Moreno S."/>
            <person name="Armstrong J."/>
            <person name="Forsburg S.L."/>
            <person name="Cerutti L."/>
            <person name="Lowe T."/>
            <person name="McCombie W.R."/>
            <person name="Paulsen I."/>
            <person name="Potashkin J."/>
            <person name="Shpakovski G.V."/>
            <person name="Ussery D."/>
            <person name="Barrell B.G."/>
            <person name="Nurse P."/>
        </authorList>
    </citation>
    <scope>NUCLEOTIDE SEQUENCE [LARGE SCALE GENOMIC DNA]</scope>
    <source>
        <strain>972 / ATCC 24843</strain>
    </source>
</reference>
<reference key="2">
    <citation type="journal article" date="2003" name="Biochem. Biophys. Res. Commun.">
        <title>Role of guanine nucleotide exchange factors for Rho family GTPases in the regulation of cell morphology and actin cytoskeleton in fission yeast.</title>
        <authorList>
            <person name="Iwaki N."/>
            <person name="Karatsu K."/>
            <person name="Miyamoto M."/>
        </authorList>
    </citation>
    <scope>FUNCTION</scope>
</reference>
<reference key="3">
    <citation type="journal article" date="2006" name="Nat. Biotechnol.">
        <title>ORFeome cloning and global analysis of protein localization in the fission yeast Schizosaccharomyces pombe.</title>
        <authorList>
            <person name="Matsuyama A."/>
            <person name="Arai R."/>
            <person name="Yashiroda Y."/>
            <person name="Shirai A."/>
            <person name="Kamata A."/>
            <person name="Sekido S."/>
            <person name="Kobayashi Y."/>
            <person name="Hashimoto A."/>
            <person name="Hamamoto M."/>
            <person name="Hiraoka Y."/>
            <person name="Horinouchi S."/>
            <person name="Yoshida M."/>
        </authorList>
    </citation>
    <scope>SUBCELLULAR LOCATION [LARGE SCALE ANALYSIS]</scope>
</reference>
<evidence type="ECO:0000255" key="1">
    <source>
        <dbReference type="PROSITE-ProRule" id="PRU00062"/>
    </source>
</evidence>
<evidence type="ECO:0000269" key="2">
    <source>
    </source>
</evidence>
<evidence type="ECO:0000269" key="3">
    <source>
    </source>
</evidence>
<accession>O59679</accession>
<proteinExistence type="predicted"/>